<name>XYPA_MYCS2</name>
<dbReference type="EMBL" id="CP000480">
    <property type="protein sequence ID" value="ABK73733.1"/>
    <property type="molecule type" value="Genomic_DNA"/>
</dbReference>
<dbReference type="EMBL" id="CP001663">
    <property type="protein sequence ID" value="AFP39978.1"/>
    <property type="molecule type" value="Genomic_DNA"/>
</dbReference>
<dbReference type="RefSeq" id="WP_003895054.1">
    <property type="nucleotide sequence ID" value="NZ_SIJM01000008.1"/>
</dbReference>
<dbReference type="RefSeq" id="YP_887901.1">
    <property type="nucleotide sequence ID" value="NC_008596.1"/>
</dbReference>
<dbReference type="PDB" id="4RS3">
    <property type="method" value="X-ray"/>
    <property type="resolution" value="1.40 A"/>
    <property type="chains" value="A=25-349"/>
</dbReference>
<dbReference type="PDB" id="5HKO">
    <property type="method" value="X-ray"/>
    <property type="resolution" value="1.20 A"/>
    <property type="chains" value="A=25-349"/>
</dbReference>
<dbReference type="PDBsum" id="4RS3"/>
<dbReference type="PDBsum" id="5HKO"/>
<dbReference type="SMR" id="A0QYB3"/>
<dbReference type="STRING" id="246196.MSMEG_3598"/>
<dbReference type="PaxDb" id="246196-MSMEI_3515"/>
<dbReference type="GeneID" id="93458355"/>
<dbReference type="KEGG" id="msb:LJ00_17900"/>
<dbReference type="KEGG" id="msg:MSMEI_3515"/>
<dbReference type="KEGG" id="msm:MSMEG_3598"/>
<dbReference type="PATRIC" id="fig|246196.19.peg.3548"/>
<dbReference type="eggNOG" id="COG1879">
    <property type="taxonomic scope" value="Bacteria"/>
</dbReference>
<dbReference type="OrthoDB" id="9813037at2"/>
<dbReference type="EvolutionaryTrace" id="A0QYB3"/>
<dbReference type="Proteomes" id="UP000000757">
    <property type="component" value="Chromosome"/>
</dbReference>
<dbReference type="Proteomes" id="UP000006158">
    <property type="component" value="Chromosome"/>
</dbReference>
<dbReference type="GO" id="GO:0005886">
    <property type="term" value="C:plasma membrane"/>
    <property type="evidence" value="ECO:0007669"/>
    <property type="project" value="UniProtKB-SubCell"/>
</dbReference>
<dbReference type="GO" id="GO:0030246">
    <property type="term" value="F:carbohydrate binding"/>
    <property type="evidence" value="ECO:0000314"/>
    <property type="project" value="UniProtKB"/>
</dbReference>
<dbReference type="GO" id="GO:0008643">
    <property type="term" value="P:carbohydrate transport"/>
    <property type="evidence" value="ECO:0000317"/>
    <property type="project" value="UniProtKB"/>
</dbReference>
<dbReference type="GO" id="GO:0071322">
    <property type="term" value="P:cellular response to carbohydrate stimulus"/>
    <property type="evidence" value="ECO:0000314"/>
    <property type="project" value="UniProtKB"/>
</dbReference>
<dbReference type="CDD" id="cd06313">
    <property type="entry name" value="PBP1_ABC_ThpA_XypA"/>
    <property type="match status" value="1"/>
</dbReference>
<dbReference type="FunFam" id="3.40.50.2300:FF:000248">
    <property type="entry name" value="LacI family transcriptional regulator"/>
    <property type="match status" value="1"/>
</dbReference>
<dbReference type="Gene3D" id="3.40.50.2300">
    <property type="match status" value="2"/>
</dbReference>
<dbReference type="InterPro" id="IPR028082">
    <property type="entry name" value="Peripla_BP_I"/>
</dbReference>
<dbReference type="InterPro" id="IPR025997">
    <property type="entry name" value="SBP_2_dom"/>
</dbReference>
<dbReference type="PANTHER" id="PTHR46847">
    <property type="entry name" value="D-ALLOSE-BINDING PERIPLASMIC PROTEIN-RELATED"/>
    <property type="match status" value="1"/>
</dbReference>
<dbReference type="PANTHER" id="PTHR46847:SF1">
    <property type="entry name" value="D-ALLOSE-BINDING PERIPLASMIC PROTEIN-RELATED"/>
    <property type="match status" value="1"/>
</dbReference>
<dbReference type="Pfam" id="PF13407">
    <property type="entry name" value="Peripla_BP_4"/>
    <property type="match status" value="1"/>
</dbReference>
<dbReference type="SUPFAM" id="SSF53822">
    <property type="entry name" value="Periplasmic binding protein-like I"/>
    <property type="match status" value="1"/>
</dbReference>
<dbReference type="PROSITE" id="PS51257">
    <property type="entry name" value="PROKAR_LIPOPROTEIN"/>
    <property type="match status" value="1"/>
</dbReference>
<organism>
    <name type="scientific">Mycolicibacterium smegmatis (strain ATCC 700084 / mc(2)155)</name>
    <name type="common">Mycobacterium smegmatis</name>
    <dbReference type="NCBI Taxonomy" id="246196"/>
    <lineage>
        <taxon>Bacteria</taxon>
        <taxon>Bacillati</taxon>
        <taxon>Actinomycetota</taxon>
        <taxon>Actinomycetes</taxon>
        <taxon>Mycobacteriales</taxon>
        <taxon>Mycobacteriaceae</taxon>
        <taxon>Mycolicibacterium</taxon>
    </lineage>
</organism>
<sequence length="349" mass="36081">MNITSKIGAIAAAGAVGLGLTACGAGDTAANSDTKRIGVTVYDMSSFITEGKEGMDTYAKANNIELVWNSANNDVSTQASQVDSLINQGVDAIIVVPVQADSLGPQVASAKSKGIPLLAVNAALETPDLAGNVQPDDVAAGAQEMQMMADRLGGKGNIVILQGPLGGSGEINRGKGIDQVLAKYPDIKVLAKDTANWKRDEAVNKMKNWISSFGPQIDGVVAQNDDMGLGALQALKEAGRTGVPIVGIDGIEDGLNAVKSGDFIGTSLQNGTVELSAGLAVADALVKGEDVKTDPVYVMPAITKDNVDVAIEHVVTERQKFLDGLVELTQQNLKTGDIAYEGIPGQTQP</sequence>
<gene>
    <name evidence="3" type="primary">xypA</name>
    <name evidence="5" type="ordered locus">MSMEG_3598</name>
    <name evidence="6" type="ordered locus">MSMEI_3515</name>
</gene>
<comment type="function">
    <text evidence="2">Part of an ABC transporter complex likely involved in xylitol import. Binds xylitol.</text>
</comment>
<comment type="subcellular location">
    <subcellularLocation>
        <location evidence="1">Cell membrane</location>
        <topology evidence="1">Lipid-anchor</topology>
    </subcellularLocation>
</comment>
<comment type="induction">
    <text evidence="2">Up-regulated during growth on D-threitol relative to growth on glycerol.</text>
</comment>
<comment type="similarity">
    <text evidence="4">Belongs to the bacterial solute-binding protein 2 family.</text>
</comment>
<keyword id="KW-0002">3D-structure</keyword>
<keyword id="KW-1003">Cell membrane</keyword>
<keyword id="KW-0449">Lipoprotein</keyword>
<keyword id="KW-0472">Membrane</keyword>
<keyword id="KW-0564">Palmitate</keyword>
<keyword id="KW-1185">Reference proteome</keyword>
<keyword id="KW-0732">Signal</keyword>
<keyword id="KW-0762">Sugar transport</keyword>
<keyword id="KW-0813">Transport</keyword>
<accession>A0QYB3</accession>
<reference key="1">
    <citation type="submission" date="2006-10" db="EMBL/GenBank/DDBJ databases">
        <authorList>
            <person name="Fleischmann R.D."/>
            <person name="Dodson R.J."/>
            <person name="Haft D.H."/>
            <person name="Merkel J.S."/>
            <person name="Nelson W.C."/>
            <person name="Fraser C.M."/>
        </authorList>
    </citation>
    <scope>NUCLEOTIDE SEQUENCE [LARGE SCALE GENOMIC DNA]</scope>
    <source>
        <strain>ATCC 700084 / mc(2)155</strain>
    </source>
</reference>
<reference key="2">
    <citation type="journal article" date="2007" name="Genome Biol.">
        <title>Interrupted coding sequences in Mycobacterium smegmatis: authentic mutations or sequencing errors?</title>
        <authorList>
            <person name="Deshayes C."/>
            <person name="Perrodou E."/>
            <person name="Gallien S."/>
            <person name="Euphrasie D."/>
            <person name="Schaeffer C."/>
            <person name="Van-Dorsselaer A."/>
            <person name="Poch O."/>
            <person name="Lecompte O."/>
            <person name="Reyrat J.-M."/>
        </authorList>
    </citation>
    <scope>NUCLEOTIDE SEQUENCE [LARGE SCALE GENOMIC DNA]</scope>
    <source>
        <strain>ATCC 700084 / mc(2)155</strain>
    </source>
</reference>
<reference key="3">
    <citation type="journal article" date="2009" name="Genome Res.">
        <title>Ortho-proteogenomics: multiple proteomes investigation through orthology and a new MS-based protocol.</title>
        <authorList>
            <person name="Gallien S."/>
            <person name="Perrodou E."/>
            <person name="Carapito C."/>
            <person name="Deshayes C."/>
            <person name="Reyrat J.-M."/>
            <person name="Van Dorsselaer A."/>
            <person name="Poch O."/>
            <person name="Schaeffer C."/>
            <person name="Lecompte O."/>
        </authorList>
    </citation>
    <scope>NUCLEOTIDE SEQUENCE [LARGE SCALE GENOMIC DNA]</scope>
    <source>
        <strain>ATCC 700084 / mc(2)155</strain>
    </source>
</reference>
<reference key="4">
    <citation type="journal article" date="2015" name="J. Am. Chem. Soc.">
        <title>A general strategy for the discovery of metabolic pathways: D-threitol, L-threitol, and erythritol utilization in Mycobacterium smegmatis.</title>
        <authorList>
            <person name="Huang H."/>
            <person name="Carter M.S."/>
            <person name="Vetting M.W."/>
            <person name="Al-Obaidi N."/>
            <person name="Patskovsky Y."/>
            <person name="Almo S.C."/>
            <person name="Gerlt J.A."/>
        </authorList>
    </citation>
    <scope>X-RAY CRYSTALLOGRAPHY (1.40 ANGSTROMS) OF 25-349 IN COMPLEX WITH XYLITOL</scope>
    <scope>FUNCTION</scope>
    <scope>INDUCTION</scope>
    <source>
        <strain>ATCC 700084 / mc(2)155</strain>
    </source>
</reference>
<protein>
    <recommendedName>
        <fullName evidence="3">Xylitol-binding protein</fullName>
    </recommendedName>
</protein>
<feature type="signal peptide" evidence="1">
    <location>
        <begin position="1"/>
        <end position="22"/>
    </location>
</feature>
<feature type="chain" id="PRO_5005658518" description="Xylitol-binding protein">
    <location>
        <begin position="23"/>
        <end position="349"/>
    </location>
</feature>
<feature type="binding site" evidence="2 7">
    <location>
        <position position="42"/>
    </location>
    <ligand>
        <name>xylitol</name>
        <dbReference type="ChEBI" id="CHEBI:17151"/>
    </ligand>
</feature>
<feature type="binding site" evidence="2 7">
    <location>
        <position position="121"/>
    </location>
    <ligand>
        <name>xylitol</name>
        <dbReference type="ChEBI" id="CHEBI:17151"/>
    </ligand>
</feature>
<feature type="binding site" evidence="2 7">
    <location>
        <position position="173"/>
    </location>
    <ligand>
        <name>xylitol</name>
        <dbReference type="ChEBI" id="CHEBI:17151"/>
    </ligand>
</feature>
<feature type="binding site" evidence="2 7">
    <location>
        <position position="224"/>
    </location>
    <ligand>
        <name>xylitol</name>
        <dbReference type="ChEBI" id="CHEBI:17151"/>
    </ligand>
</feature>
<feature type="binding site" evidence="2 7">
    <location>
        <position position="249"/>
    </location>
    <ligand>
        <name>xylitol</name>
        <dbReference type="ChEBI" id="CHEBI:17151"/>
    </ligand>
</feature>
<feature type="binding site" evidence="2 7">
    <location>
        <position position="269"/>
    </location>
    <ligand>
        <name>xylitol</name>
        <dbReference type="ChEBI" id="CHEBI:17151"/>
    </ligand>
</feature>
<feature type="lipid moiety-binding region" description="N-palmitoyl cysteine" evidence="1">
    <location>
        <position position="23"/>
    </location>
</feature>
<feature type="lipid moiety-binding region" description="S-diacylglycerol cysteine" evidence="1">
    <location>
        <position position="23"/>
    </location>
</feature>
<feature type="strand" evidence="8">
    <location>
        <begin position="35"/>
        <end position="42"/>
    </location>
</feature>
<feature type="helix" evidence="8">
    <location>
        <begin position="46"/>
        <end position="61"/>
    </location>
</feature>
<feature type="strand" evidence="8">
    <location>
        <begin position="64"/>
        <end position="70"/>
    </location>
</feature>
<feature type="helix" evidence="8">
    <location>
        <begin position="75"/>
        <end position="87"/>
    </location>
</feature>
<feature type="strand" evidence="8">
    <location>
        <begin position="91"/>
        <end position="96"/>
    </location>
</feature>
<feature type="helix" evidence="8">
    <location>
        <begin position="104"/>
        <end position="112"/>
    </location>
</feature>
<feature type="strand" evidence="8">
    <location>
        <begin position="117"/>
        <end position="122"/>
    </location>
</feature>
<feature type="strand" evidence="8">
    <location>
        <begin position="130"/>
        <end position="135"/>
    </location>
</feature>
<feature type="helix" evidence="8">
    <location>
        <begin position="137"/>
        <end position="152"/>
    </location>
</feature>
<feature type="strand" evidence="8">
    <location>
        <begin position="156"/>
        <end position="162"/>
    </location>
</feature>
<feature type="helix" evidence="8">
    <location>
        <begin position="168"/>
        <end position="181"/>
    </location>
</feature>
<feature type="strand" evidence="8">
    <location>
        <begin position="187"/>
        <end position="194"/>
    </location>
</feature>
<feature type="helix" evidence="8">
    <location>
        <begin position="199"/>
        <end position="213"/>
    </location>
</feature>
<feature type="helix" evidence="8">
    <location>
        <begin position="214"/>
        <end position="216"/>
    </location>
</feature>
<feature type="strand" evidence="8">
    <location>
        <begin position="219"/>
        <end position="224"/>
    </location>
</feature>
<feature type="helix" evidence="8">
    <location>
        <begin position="225"/>
        <end position="237"/>
    </location>
</feature>
<feature type="helix" evidence="8">
    <location>
        <begin position="252"/>
        <end position="259"/>
    </location>
</feature>
<feature type="strand" evidence="8">
    <location>
        <begin position="262"/>
        <end position="268"/>
    </location>
</feature>
<feature type="helix" evidence="8">
    <location>
        <begin position="271"/>
        <end position="286"/>
    </location>
</feature>
<feature type="turn" evidence="8">
    <location>
        <begin position="304"/>
        <end position="306"/>
    </location>
</feature>
<feature type="helix" evidence="8">
    <location>
        <begin position="307"/>
        <end position="314"/>
    </location>
</feature>
<feature type="helix" evidence="8">
    <location>
        <begin position="318"/>
        <end position="335"/>
    </location>
</feature>
<evidence type="ECO:0000255" key="1">
    <source>
        <dbReference type="PROSITE-ProRule" id="PRU00303"/>
    </source>
</evidence>
<evidence type="ECO:0000269" key="2">
    <source>
    </source>
</evidence>
<evidence type="ECO:0000303" key="3">
    <source>
    </source>
</evidence>
<evidence type="ECO:0000305" key="4"/>
<evidence type="ECO:0000312" key="5">
    <source>
        <dbReference type="EMBL" id="ABK73733.1"/>
    </source>
</evidence>
<evidence type="ECO:0000312" key="6">
    <source>
        <dbReference type="EMBL" id="AFP39978.1"/>
    </source>
</evidence>
<evidence type="ECO:0007744" key="7">
    <source>
        <dbReference type="PDB" id="4RS3"/>
    </source>
</evidence>
<evidence type="ECO:0007829" key="8">
    <source>
        <dbReference type="PDB" id="5HKO"/>
    </source>
</evidence>
<proteinExistence type="evidence at protein level"/>